<evidence type="ECO:0000255" key="1">
    <source>
        <dbReference type="HAMAP-Rule" id="MF_00148"/>
    </source>
</evidence>
<comment type="function">
    <text evidence="1">Excises uracil residues from the DNA which can arise as a result of misincorporation of dUMP residues by DNA polymerase or due to deamination of cytosine.</text>
</comment>
<comment type="catalytic activity">
    <reaction evidence="1">
        <text>Hydrolyzes single-stranded DNA or mismatched double-stranded DNA and polynucleotides, releasing free uracil.</text>
        <dbReference type="EC" id="3.2.2.27"/>
    </reaction>
</comment>
<comment type="subcellular location">
    <subcellularLocation>
        <location evidence="1">Cytoplasm</location>
    </subcellularLocation>
</comment>
<comment type="similarity">
    <text evidence="1">Belongs to the uracil-DNA glycosylase (UDG) superfamily. UNG family.</text>
</comment>
<feature type="chain" id="PRO_1000199762" description="Uracil-DNA glycosylase">
    <location>
        <begin position="1"/>
        <end position="225"/>
    </location>
</feature>
<feature type="active site" description="Proton acceptor" evidence="1">
    <location>
        <position position="65"/>
    </location>
</feature>
<sequence>MKHVLKNDWGPLLAPEFEKEYYRELDVFLKEEYSTHVVYPKIEDIFNALEYTSYENTKVVILGQDPYHGPNQAHGLSFSVQPGVKTPPSLLNMYKELRDEYGYDIPNNGYLVKWAEQGVLLLNTVLTVRQGEANSHKGKGWEHFTDRVIELLNEREKPVIFILWGRHAQAKKKLITNPNHQIIESVHPSPLSARRGFFGSKPYSKVNTILANMGEGEIDWEIPNL</sequence>
<accession>C3P2F8</accession>
<organism>
    <name type="scientific">Bacillus anthracis (strain A0248)</name>
    <dbReference type="NCBI Taxonomy" id="592021"/>
    <lineage>
        <taxon>Bacteria</taxon>
        <taxon>Bacillati</taxon>
        <taxon>Bacillota</taxon>
        <taxon>Bacilli</taxon>
        <taxon>Bacillales</taxon>
        <taxon>Bacillaceae</taxon>
        <taxon>Bacillus</taxon>
        <taxon>Bacillus cereus group</taxon>
    </lineage>
</organism>
<keyword id="KW-0963">Cytoplasm</keyword>
<keyword id="KW-0227">DNA damage</keyword>
<keyword id="KW-0234">DNA repair</keyword>
<keyword id="KW-0378">Hydrolase</keyword>
<gene>
    <name evidence="1" type="primary">ung</name>
    <name type="ordered locus">BAA_5675</name>
</gene>
<proteinExistence type="inferred from homology"/>
<protein>
    <recommendedName>
        <fullName evidence="1">Uracil-DNA glycosylase</fullName>
        <shortName evidence="1">UDG</shortName>
        <ecNumber evidence="1">3.2.2.27</ecNumber>
    </recommendedName>
</protein>
<name>UNG_BACAA</name>
<reference key="1">
    <citation type="submission" date="2009-04" db="EMBL/GenBank/DDBJ databases">
        <title>Genome sequence of Bacillus anthracis A0248.</title>
        <authorList>
            <person name="Dodson R.J."/>
            <person name="Munk A.C."/>
            <person name="Bruce D."/>
            <person name="Detter C."/>
            <person name="Tapia R."/>
            <person name="Sutton G."/>
            <person name="Sims D."/>
            <person name="Brettin T."/>
        </authorList>
    </citation>
    <scope>NUCLEOTIDE SEQUENCE [LARGE SCALE GENOMIC DNA]</scope>
    <source>
        <strain>A0248</strain>
    </source>
</reference>
<dbReference type="EC" id="3.2.2.27" evidence="1"/>
<dbReference type="EMBL" id="CP001598">
    <property type="protein sequence ID" value="ACQ46314.1"/>
    <property type="molecule type" value="Genomic_DNA"/>
</dbReference>
<dbReference type="RefSeq" id="WP_000683472.1">
    <property type="nucleotide sequence ID" value="NC_012659.1"/>
</dbReference>
<dbReference type="SMR" id="C3P2F8"/>
<dbReference type="GeneID" id="45025225"/>
<dbReference type="KEGG" id="bai:BAA_5675"/>
<dbReference type="HOGENOM" id="CLU_032162_3_0_9"/>
<dbReference type="GO" id="GO:0005737">
    <property type="term" value="C:cytoplasm"/>
    <property type="evidence" value="ECO:0007669"/>
    <property type="project" value="UniProtKB-SubCell"/>
</dbReference>
<dbReference type="GO" id="GO:0004844">
    <property type="term" value="F:uracil DNA N-glycosylase activity"/>
    <property type="evidence" value="ECO:0007669"/>
    <property type="project" value="UniProtKB-UniRule"/>
</dbReference>
<dbReference type="GO" id="GO:0097510">
    <property type="term" value="P:base-excision repair, AP site formation via deaminated base removal"/>
    <property type="evidence" value="ECO:0007669"/>
    <property type="project" value="TreeGrafter"/>
</dbReference>
<dbReference type="CDD" id="cd10027">
    <property type="entry name" value="UDG-F1-like"/>
    <property type="match status" value="1"/>
</dbReference>
<dbReference type="FunFam" id="3.40.470.10:FF:000001">
    <property type="entry name" value="Uracil-DNA glycosylase"/>
    <property type="match status" value="1"/>
</dbReference>
<dbReference type="Gene3D" id="3.40.470.10">
    <property type="entry name" value="Uracil-DNA glycosylase-like domain"/>
    <property type="match status" value="1"/>
</dbReference>
<dbReference type="HAMAP" id="MF_00148">
    <property type="entry name" value="UDG"/>
    <property type="match status" value="1"/>
</dbReference>
<dbReference type="InterPro" id="IPR002043">
    <property type="entry name" value="UDG_fam1"/>
</dbReference>
<dbReference type="InterPro" id="IPR018085">
    <property type="entry name" value="Ura-DNA_Glyclase_AS"/>
</dbReference>
<dbReference type="InterPro" id="IPR005122">
    <property type="entry name" value="Uracil-DNA_glycosylase-like"/>
</dbReference>
<dbReference type="InterPro" id="IPR036895">
    <property type="entry name" value="Uracil-DNA_glycosylase-like_sf"/>
</dbReference>
<dbReference type="NCBIfam" id="NF003588">
    <property type="entry name" value="PRK05254.1-1"/>
    <property type="match status" value="1"/>
</dbReference>
<dbReference type="NCBIfam" id="NF003589">
    <property type="entry name" value="PRK05254.1-2"/>
    <property type="match status" value="1"/>
</dbReference>
<dbReference type="NCBIfam" id="NF003591">
    <property type="entry name" value="PRK05254.1-4"/>
    <property type="match status" value="1"/>
</dbReference>
<dbReference type="NCBIfam" id="NF003592">
    <property type="entry name" value="PRK05254.1-5"/>
    <property type="match status" value="1"/>
</dbReference>
<dbReference type="NCBIfam" id="TIGR00628">
    <property type="entry name" value="ung"/>
    <property type="match status" value="1"/>
</dbReference>
<dbReference type="PANTHER" id="PTHR11264">
    <property type="entry name" value="URACIL-DNA GLYCOSYLASE"/>
    <property type="match status" value="1"/>
</dbReference>
<dbReference type="PANTHER" id="PTHR11264:SF0">
    <property type="entry name" value="URACIL-DNA GLYCOSYLASE"/>
    <property type="match status" value="1"/>
</dbReference>
<dbReference type="Pfam" id="PF03167">
    <property type="entry name" value="UDG"/>
    <property type="match status" value="1"/>
</dbReference>
<dbReference type="SMART" id="SM00986">
    <property type="entry name" value="UDG"/>
    <property type="match status" value="1"/>
</dbReference>
<dbReference type="SMART" id="SM00987">
    <property type="entry name" value="UreE_C"/>
    <property type="match status" value="1"/>
</dbReference>
<dbReference type="SUPFAM" id="SSF52141">
    <property type="entry name" value="Uracil-DNA glycosylase-like"/>
    <property type="match status" value="1"/>
</dbReference>
<dbReference type="PROSITE" id="PS00130">
    <property type="entry name" value="U_DNA_GLYCOSYLASE"/>
    <property type="match status" value="1"/>
</dbReference>